<organism>
    <name type="scientific">Streptococcus agalactiae serotype V (strain ATCC BAA-611 / 2603 V/R)</name>
    <dbReference type="NCBI Taxonomy" id="208435"/>
    <lineage>
        <taxon>Bacteria</taxon>
        <taxon>Bacillati</taxon>
        <taxon>Bacillota</taxon>
        <taxon>Bacilli</taxon>
        <taxon>Lactobacillales</taxon>
        <taxon>Streptococcaceae</taxon>
        <taxon>Streptococcus</taxon>
    </lineage>
</organism>
<evidence type="ECO:0000255" key="1">
    <source>
        <dbReference type="HAMAP-Rule" id="MF_00139"/>
    </source>
</evidence>
<evidence type="ECO:0000255" key="2">
    <source>
        <dbReference type="PROSITE-ProRule" id="PRU01202"/>
    </source>
</evidence>
<protein>
    <recommendedName>
        <fullName evidence="1">Bifunctional purine biosynthesis protein PurH</fullName>
    </recommendedName>
    <domain>
        <recommendedName>
            <fullName evidence="1">Phosphoribosylaminoimidazolecarboxamide formyltransferase</fullName>
            <ecNumber evidence="1">2.1.2.3</ecNumber>
        </recommendedName>
        <alternativeName>
            <fullName evidence="1">AICAR transformylase</fullName>
        </alternativeName>
    </domain>
    <domain>
        <recommendedName>
            <fullName evidence="1">IMP cyclohydrolase</fullName>
            <ecNumber evidence="1">3.5.4.10</ecNumber>
        </recommendedName>
        <alternativeName>
            <fullName evidence="1">ATIC</fullName>
        </alternativeName>
        <alternativeName>
            <fullName evidence="1">IMP synthase</fullName>
        </alternativeName>
        <alternativeName>
            <fullName evidence="1">Inosinicase</fullName>
        </alternativeName>
    </domain>
</protein>
<keyword id="KW-0378">Hydrolase</keyword>
<keyword id="KW-0511">Multifunctional enzyme</keyword>
<keyword id="KW-0658">Purine biosynthesis</keyword>
<keyword id="KW-1185">Reference proteome</keyword>
<keyword id="KW-0808">Transferase</keyword>
<name>PUR9_STRA5</name>
<proteinExistence type="inferred from homology"/>
<accession>P67546</accession>
<accession>Q8E2F8</accession>
<accession>Q8E7W6</accession>
<comment type="catalytic activity">
    <reaction evidence="1">
        <text>(6R)-10-formyltetrahydrofolate + 5-amino-1-(5-phospho-beta-D-ribosyl)imidazole-4-carboxamide = 5-formamido-1-(5-phospho-D-ribosyl)imidazole-4-carboxamide + (6S)-5,6,7,8-tetrahydrofolate</text>
        <dbReference type="Rhea" id="RHEA:22192"/>
        <dbReference type="ChEBI" id="CHEBI:57453"/>
        <dbReference type="ChEBI" id="CHEBI:58467"/>
        <dbReference type="ChEBI" id="CHEBI:58475"/>
        <dbReference type="ChEBI" id="CHEBI:195366"/>
        <dbReference type="EC" id="2.1.2.3"/>
    </reaction>
</comment>
<comment type="catalytic activity">
    <reaction evidence="1">
        <text>IMP + H2O = 5-formamido-1-(5-phospho-D-ribosyl)imidazole-4-carboxamide</text>
        <dbReference type="Rhea" id="RHEA:18445"/>
        <dbReference type="ChEBI" id="CHEBI:15377"/>
        <dbReference type="ChEBI" id="CHEBI:58053"/>
        <dbReference type="ChEBI" id="CHEBI:58467"/>
        <dbReference type="EC" id="3.5.4.10"/>
    </reaction>
</comment>
<comment type="pathway">
    <text evidence="1">Purine metabolism; IMP biosynthesis via de novo pathway; 5-formamido-1-(5-phospho-D-ribosyl)imidazole-4-carboxamide from 5-amino-1-(5-phospho-D-ribosyl)imidazole-4-carboxamide (10-formyl THF route): step 1/1.</text>
</comment>
<comment type="pathway">
    <text evidence="1">Purine metabolism; IMP biosynthesis via de novo pathway; IMP from 5-formamido-1-(5-phospho-D-ribosyl)imidazole-4-carboxamide: step 1/1.</text>
</comment>
<comment type="domain">
    <text evidence="1">The IMP cyclohydrolase activity resides in the N-terminal region.</text>
</comment>
<comment type="similarity">
    <text evidence="1">Belongs to the PurH family.</text>
</comment>
<gene>
    <name evidence="1" type="primary">purH</name>
    <name type="ordered locus">SAG0030</name>
</gene>
<reference key="1">
    <citation type="journal article" date="2002" name="Proc. Natl. Acad. Sci. U.S.A.">
        <title>Complete genome sequence and comparative genomic analysis of an emerging human pathogen, serotype V Streptococcus agalactiae.</title>
        <authorList>
            <person name="Tettelin H."/>
            <person name="Masignani V."/>
            <person name="Cieslewicz M.J."/>
            <person name="Eisen J.A."/>
            <person name="Peterson S.N."/>
            <person name="Wessels M.R."/>
            <person name="Paulsen I.T."/>
            <person name="Nelson K.E."/>
            <person name="Margarit I."/>
            <person name="Read T.D."/>
            <person name="Madoff L.C."/>
            <person name="Wolf A.M."/>
            <person name="Beanan M.J."/>
            <person name="Brinkac L.M."/>
            <person name="Daugherty S.C."/>
            <person name="DeBoy R.T."/>
            <person name="Durkin A.S."/>
            <person name="Kolonay J.F."/>
            <person name="Madupu R."/>
            <person name="Lewis M.R."/>
            <person name="Radune D."/>
            <person name="Fedorova N.B."/>
            <person name="Scanlan D."/>
            <person name="Khouri H.M."/>
            <person name="Mulligan S."/>
            <person name="Carty H.A."/>
            <person name="Cline R.T."/>
            <person name="Van Aken S.E."/>
            <person name="Gill J."/>
            <person name="Scarselli M."/>
            <person name="Mora M."/>
            <person name="Iacobini E.T."/>
            <person name="Brettoni C."/>
            <person name="Galli G."/>
            <person name="Mariani M."/>
            <person name="Vegni F."/>
            <person name="Maione D."/>
            <person name="Rinaudo D."/>
            <person name="Rappuoli R."/>
            <person name="Telford J.L."/>
            <person name="Kasper D.L."/>
            <person name="Grandi G."/>
            <person name="Fraser C.M."/>
        </authorList>
    </citation>
    <scope>NUCLEOTIDE SEQUENCE [LARGE SCALE GENOMIC DNA]</scope>
    <source>
        <strain>ATCC BAA-611 / 2603 V/R</strain>
    </source>
</reference>
<dbReference type="EC" id="2.1.2.3" evidence="1"/>
<dbReference type="EC" id="3.5.4.10" evidence="1"/>
<dbReference type="EMBL" id="AE009948">
    <property type="protein sequence ID" value="AAM98938.1"/>
    <property type="molecule type" value="Genomic_DNA"/>
</dbReference>
<dbReference type="RefSeq" id="NP_687066.1">
    <property type="nucleotide sequence ID" value="NC_004116.1"/>
</dbReference>
<dbReference type="RefSeq" id="WP_000166549.1">
    <property type="nucleotide sequence ID" value="NC_004116.1"/>
</dbReference>
<dbReference type="SMR" id="P67546"/>
<dbReference type="STRING" id="208435.SAG0030"/>
<dbReference type="KEGG" id="sag:SAG0030"/>
<dbReference type="PATRIC" id="fig|208435.3.peg.29"/>
<dbReference type="HOGENOM" id="CLU_016316_5_2_9"/>
<dbReference type="OrthoDB" id="9802065at2"/>
<dbReference type="UniPathway" id="UPA00074">
    <property type="reaction ID" value="UER00133"/>
</dbReference>
<dbReference type="UniPathway" id="UPA00074">
    <property type="reaction ID" value="UER00135"/>
</dbReference>
<dbReference type="Proteomes" id="UP000000821">
    <property type="component" value="Chromosome"/>
</dbReference>
<dbReference type="GO" id="GO:0005829">
    <property type="term" value="C:cytosol"/>
    <property type="evidence" value="ECO:0007669"/>
    <property type="project" value="TreeGrafter"/>
</dbReference>
<dbReference type="GO" id="GO:0003937">
    <property type="term" value="F:IMP cyclohydrolase activity"/>
    <property type="evidence" value="ECO:0007669"/>
    <property type="project" value="UniProtKB-UniRule"/>
</dbReference>
<dbReference type="GO" id="GO:0004643">
    <property type="term" value="F:phosphoribosylaminoimidazolecarboxamide formyltransferase activity"/>
    <property type="evidence" value="ECO:0007669"/>
    <property type="project" value="UniProtKB-UniRule"/>
</dbReference>
<dbReference type="GO" id="GO:0006189">
    <property type="term" value="P:'de novo' IMP biosynthetic process"/>
    <property type="evidence" value="ECO:0007669"/>
    <property type="project" value="UniProtKB-UniRule"/>
</dbReference>
<dbReference type="CDD" id="cd01421">
    <property type="entry name" value="IMPCH"/>
    <property type="match status" value="1"/>
</dbReference>
<dbReference type="FunFam" id="3.40.140.20:FF:000001">
    <property type="entry name" value="Bifunctional purine biosynthesis protein PurH"/>
    <property type="match status" value="1"/>
</dbReference>
<dbReference type="FunFam" id="3.40.140.20:FF:000002">
    <property type="entry name" value="Bifunctional purine biosynthesis protein PurH"/>
    <property type="match status" value="1"/>
</dbReference>
<dbReference type="FunFam" id="3.40.50.1380:FF:000001">
    <property type="entry name" value="Bifunctional purine biosynthesis protein PurH"/>
    <property type="match status" value="1"/>
</dbReference>
<dbReference type="Gene3D" id="3.40.140.20">
    <property type="match status" value="2"/>
</dbReference>
<dbReference type="Gene3D" id="3.40.50.1380">
    <property type="entry name" value="Methylglyoxal synthase-like domain"/>
    <property type="match status" value="1"/>
</dbReference>
<dbReference type="HAMAP" id="MF_00139">
    <property type="entry name" value="PurH"/>
    <property type="match status" value="1"/>
</dbReference>
<dbReference type="InterPro" id="IPR024051">
    <property type="entry name" value="AICAR_Tfase_dup_dom_sf"/>
</dbReference>
<dbReference type="InterPro" id="IPR016193">
    <property type="entry name" value="Cytidine_deaminase-like"/>
</dbReference>
<dbReference type="InterPro" id="IPR011607">
    <property type="entry name" value="MGS-like_dom"/>
</dbReference>
<dbReference type="InterPro" id="IPR036914">
    <property type="entry name" value="MGS-like_dom_sf"/>
</dbReference>
<dbReference type="InterPro" id="IPR002695">
    <property type="entry name" value="PurH-like"/>
</dbReference>
<dbReference type="NCBIfam" id="NF002049">
    <property type="entry name" value="PRK00881.1"/>
    <property type="match status" value="1"/>
</dbReference>
<dbReference type="NCBIfam" id="TIGR00355">
    <property type="entry name" value="purH"/>
    <property type="match status" value="1"/>
</dbReference>
<dbReference type="PANTHER" id="PTHR11692:SF0">
    <property type="entry name" value="BIFUNCTIONAL PURINE BIOSYNTHESIS PROTEIN ATIC"/>
    <property type="match status" value="1"/>
</dbReference>
<dbReference type="PANTHER" id="PTHR11692">
    <property type="entry name" value="BIFUNCTIONAL PURINE BIOSYNTHESIS PROTEIN PURH"/>
    <property type="match status" value="1"/>
</dbReference>
<dbReference type="Pfam" id="PF01808">
    <property type="entry name" value="AICARFT_IMPCHas"/>
    <property type="match status" value="1"/>
</dbReference>
<dbReference type="Pfam" id="PF02142">
    <property type="entry name" value="MGS"/>
    <property type="match status" value="1"/>
</dbReference>
<dbReference type="PIRSF" id="PIRSF000414">
    <property type="entry name" value="AICARFT_IMPCHas"/>
    <property type="match status" value="1"/>
</dbReference>
<dbReference type="SMART" id="SM00798">
    <property type="entry name" value="AICARFT_IMPCHas"/>
    <property type="match status" value="1"/>
</dbReference>
<dbReference type="SMART" id="SM00851">
    <property type="entry name" value="MGS"/>
    <property type="match status" value="1"/>
</dbReference>
<dbReference type="SUPFAM" id="SSF53927">
    <property type="entry name" value="Cytidine deaminase-like"/>
    <property type="match status" value="1"/>
</dbReference>
<dbReference type="SUPFAM" id="SSF52335">
    <property type="entry name" value="Methylglyoxal synthase-like"/>
    <property type="match status" value="1"/>
</dbReference>
<dbReference type="PROSITE" id="PS51855">
    <property type="entry name" value="MGS"/>
    <property type="match status" value="1"/>
</dbReference>
<feature type="chain" id="PRO_0000192131" description="Bifunctional purine biosynthesis protein PurH">
    <location>
        <begin position="1"/>
        <end position="515"/>
    </location>
</feature>
<feature type="domain" description="MGS-like" evidence="2">
    <location>
        <begin position="1"/>
        <end position="145"/>
    </location>
</feature>
<sequence>MTKRALISVSDKSGIIDFAKELKNLGWDIISTGGTKVALDDAGVETIAIDDVTGFPEMMDGRVKTLHPNIHGGLLARRDADSHLQAAKDNNIELIDLVVVNLYPFKETILRPDVTYDLAVENIDIGGPSMLRSAAKNHASVTVVVDSADYATVLGELADASQTTFKTRQRLAAKAFRHTAAYDALIAEYFTAQVGEAKPEKLTITYDLKQAMRYGENPQQDADFYQKALPTDYSIASAKQLNGKELSFNNIRDADAAIRIIRDFKDSPTVVALKHMNPCGIGQADDIETAWDYAYEADPVSIFGGIVVLNREVDAATAEKMHPIFLEIIIAPSYSEEALAILTNKKKNLRILELPFDAQAASEVEAEYTGVVGGLLVQNQDVVAENPSDWQVVTDRQPTEQEATALEFAWKAIKYVKSNGIIITNDHMTLGLGAGQTNRVGSVKIAIEQAKDHLDGAVLASDAFFPFADNIEEIAAAGIKAIIQPGGSVRDQESIDAANKHGLTMIFTGVRHFRH</sequence>